<comment type="function">
    <text evidence="2">Component of the cytochrome b6-f complex, which mediates electron transfer between photosystem II (PSII) and photosystem I (PSI), cyclic electron flow around PSI, and state transitions.</text>
</comment>
<comment type="cofactor">
    <cofactor evidence="2">
        <name>heme</name>
        <dbReference type="ChEBI" id="CHEBI:30413"/>
    </cofactor>
    <text evidence="2">Binds 1 heme group covalently.</text>
</comment>
<comment type="subunit">
    <text evidence="1">The 4 large subunits of the cytochrome b6-f complex are cytochrome b6, subunit IV (17 kDa polypeptide, petD), cytochrome f and the Rieske protein, while the 4 small subunits are PetG, PetL, PetM and PetN. The complex functions as a dimer (By similarity).</text>
</comment>
<comment type="subcellular location">
    <subcellularLocation>
        <location evidence="2">Plastid</location>
        <location evidence="2">Chloroplast thylakoid membrane</location>
        <topology evidence="2">Single-pass membrane protein</topology>
    </subcellularLocation>
</comment>
<comment type="similarity">
    <text evidence="2">Belongs to the cytochrome f family.</text>
</comment>
<organism>
    <name type="scientific">Welwitschia mirabilis</name>
    <name type="common">Tree tumbo</name>
    <name type="synonym">Welwitschia bainesii</name>
    <dbReference type="NCBI Taxonomy" id="3377"/>
    <lineage>
        <taxon>Eukaryota</taxon>
        <taxon>Viridiplantae</taxon>
        <taxon>Streptophyta</taxon>
        <taxon>Embryophyta</taxon>
        <taxon>Tracheophyta</taxon>
        <taxon>Spermatophyta</taxon>
        <taxon>Gnetopsida</taxon>
        <taxon>Gnetidae</taxon>
        <taxon>Welwitschiales</taxon>
        <taxon>Welwitschiaceae</taxon>
        <taxon>Welwitschia</taxon>
    </lineage>
</organism>
<accession>B2Y1X2</accession>
<sequence>MEKRNTYDWVTRWVIASFSILTISYMITWTSISNAYPIFAQKSYESPREATGRIVCANCHLAKKSVEIEVPQSVLPNSVFEAIVKIPYDTQIKQVLANGKKGGLNVGAVLILPEGFELAPSDRISPEIKQKIGNLNFQNYSPSQKNILVIGPIPGQKYREIVFPILSPDPATKKEVNFRKYPIYVGGNRGRGQVYPDGSKSNNTVYNASATGRVSQILRKDKGGYEVTIENISQGRSVVDIIPPGPELLVSEGDFVKVDQPLTNNPNVGGFGQVNAEIVLQDPFRIQGLLVFLASVVLAQIFLVLKKKQFEKVQLAEMNF</sequence>
<name>CYF_WELMI</name>
<dbReference type="EMBL" id="EU342371">
    <property type="protein sequence ID" value="ABY26802.1"/>
    <property type="molecule type" value="Genomic_DNA"/>
</dbReference>
<dbReference type="EMBL" id="AP009568">
    <property type="protein sequence ID" value="BAH11216.1"/>
    <property type="molecule type" value="Genomic_DNA"/>
</dbReference>
<dbReference type="RefSeq" id="YP_001876589.1">
    <property type="nucleotide sequence ID" value="NC_010654.1"/>
</dbReference>
<dbReference type="SMR" id="B2Y1X2"/>
<dbReference type="GeneID" id="6276196"/>
<dbReference type="GO" id="GO:0009535">
    <property type="term" value="C:chloroplast thylakoid membrane"/>
    <property type="evidence" value="ECO:0007669"/>
    <property type="project" value="UniProtKB-SubCell"/>
</dbReference>
<dbReference type="GO" id="GO:0009055">
    <property type="term" value="F:electron transfer activity"/>
    <property type="evidence" value="ECO:0007669"/>
    <property type="project" value="UniProtKB-UniRule"/>
</dbReference>
<dbReference type="GO" id="GO:0020037">
    <property type="term" value="F:heme binding"/>
    <property type="evidence" value="ECO:0007669"/>
    <property type="project" value="InterPro"/>
</dbReference>
<dbReference type="GO" id="GO:0005506">
    <property type="term" value="F:iron ion binding"/>
    <property type="evidence" value="ECO:0007669"/>
    <property type="project" value="InterPro"/>
</dbReference>
<dbReference type="GO" id="GO:0015979">
    <property type="term" value="P:photosynthesis"/>
    <property type="evidence" value="ECO:0007669"/>
    <property type="project" value="UniProtKB-UniRule"/>
</dbReference>
<dbReference type="FunFam" id="1.20.5.700:FF:000001">
    <property type="entry name" value="Cytochrome f"/>
    <property type="match status" value="1"/>
</dbReference>
<dbReference type="FunFam" id="2.40.50.100:FF:000007">
    <property type="entry name" value="Cytochrome f"/>
    <property type="match status" value="1"/>
</dbReference>
<dbReference type="FunFam" id="2.60.40.830:FF:000001">
    <property type="entry name" value="Cytochrome f"/>
    <property type="match status" value="1"/>
</dbReference>
<dbReference type="Gene3D" id="2.40.50.100">
    <property type="match status" value="1"/>
</dbReference>
<dbReference type="Gene3D" id="2.60.40.830">
    <property type="entry name" value="Cytochrome f large domain"/>
    <property type="match status" value="1"/>
</dbReference>
<dbReference type="Gene3D" id="1.20.5.700">
    <property type="entry name" value="Single helix bin"/>
    <property type="match status" value="1"/>
</dbReference>
<dbReference type="HAMAP" id="MF_00610">
    <property type="entry name" value="Cytb6_f_cytF"/>
    <property type="match status" value="1"/>
</dbReference>
<dbReference type="InterPro" id="IPR024058">
    <property type="entry name" value="Cyt-f_TM"/>
</dbReference>
<dbReference type="InterPro" id="IPR002325">
    <property type="entry name" value="Cyt_f"/>
</dbReference>
<dbReference type="InterPro" id="IPR024094">
    <property type="entry name" value="Cyt_f_lg_dom"/>
</dbReference>
<dbReference type="InterPro" id="IPR036826">
    <property type="entry name" value="Cyt_f_lg_dom_sf"/>
</dbReference>
<dbReference type="InterPro" id="IPR011054">
    <property type="entry name" value="Rudment_hybrid_motif"/>
</dbReference>
<dbReference type="PANTHER" id="PTHR33288">
    <property type="match status" value="1"/>
</dbReference>
<dbReference type="PANTHER" id="PTHR33288:SF10">
    <property type="entry name" value="CYTOCHROME F"/>
    <property type="match status" value="1"/>
</dbReference>
<dbReference type="Pfam" id="PF01333">
    <property type="entry name" value="Apocytochr_F_C"/>
    <property type="match status" value="1"/>
</dbReference>
<dbReference type="Pfam" id="PF16639">
    <property type="entry name" value="Apocytochr_F_N"/>
    <property type="match status" value="1"/>
</dbReference>
<dbReference type="PRINTS" id="PR00610">
    <property type="entry name" value="CYTOCHROMEF"/>
</dbReference>
<dbReference type="SUPFAM" id="SSF103431">
    <property type="entry name" value="Cytochrome f subunit of the cytochrome b6f complex, transmembrane anchor"/>
    <property type="match status" value="1"/>
</dbReference>
<dbReference type="SUPFAM" id="SSF49441">
    <property type="entry name" value="Cytochrome f, large domain"/>
    <property type="match status" value="1"/>
</dbReference>
<dbReference type="SUPFAM" id="SSF51246">
    <property type="entry name" value="Rudiment single hybrid motif"/>
    <property type="match status" value="1"/>
</dbReference>
<dbReference type="PROSITE" id="PS51010">
    <property type="entry name" value="CYTF"/>
    <property type="match status" value="1"/>
</dbReference>
<geneLocation type="chloroplast"/>
<keyword id="KW-0150">Chloroplast</keyword>
<keyword id="KW-0249">Electron transport</keyword>
<keyword id="KW-0349">Heme</keyword>
<keyword id="KW-0408">Iron</keyword>
<keyword id="KW-0472">Membrane</keyword>
<keyword id="KW-0479">Metal-binding</keyword>
<keyword id="KW-0602">Photosynthesis</keyword>
<keyword id="KW-0934">Plastid</keyword>
<keyword id="KW-0732">Signal</keyword>
<keyword id="KW-0793">Thylakoid</keyword>
<keyword id="KW-0812">Transmembrane</keyword>
<keyword id="KW-1133">Transmembrane helix</keyword>
<keyword id="KW-0813">Transport</keyword>
<reference key="1">
    <citation type="journal article" date="2008" name="BMC Evol. Biol.">
        <title>The complete plastid genome sequence of Welwitschia mirabilis: an unusually compact plastome with accelerated divergence rates.</title>
        <authorList>
            <person name="McCoy S.R."/>
            <person name="Kuehl J.V."/>
            <person name="Boore J.L."/>
            <person name="Raubeson L.A."/>
        </authorList>
    </citation>
    <scope>NUCLEOTIDE SEQUENCE [LARGE SCALE GENOMIC DNA]</scope>
</reference>
<reference key="2">
    <citation type="journal article" date="2009" name="Mol. Phylogenet. Evol.">
        <title>Evolution of reduced and compact chloroplast genomes (cpDNAs) in gnetophytes: Selection toward a lower-cost strategy.</title>
        <authorList>
            <person name="Wu C.-S."/>
            <person name="Lai Y.-T."/>
            <person name="Lin C.-P."/>
            <person name="Wang Y.-N."/>
            <person name="Chaw S.-M."/>
        </authorList>
    </citation>
    <scope>NUCLEOTIDE SEQUENCE [LARGE SCALE GENOMIC DNA]</scope>
</reference>
<evidence type="ECO:0000250" key="1"/>
<evidence type="ECO:0000255" key="2">
    <source>
        <dbReference type="HAMAP-Rule" id="MF_00610"/>
    </source>
</evidence>
<protein>
    <recommendedName>
        <fullName evidence="2">Cytochrome f</fullName>
    </recommendedName>
</protein>
<feature type="signal peptide" evidence="2">
    <location>
        <begin position="1"/>
        <end position="35"/>
    </location>
</feature>
<feature type="chain" id="PRO_1000192346" description="Cytochrome f">
    <location>
        <begin position="36"/>
        <end position="320"/>
    </location>
</feature>
<feature type="transmembrane region" description="Helical" evidence="2">
    <location>
        <begin position="286"/>
        <end position="306"/>
    </location>
</feature>
<feature type="binding site" description="axial binding residue" evidence="2">
    <location>
        <position position="36"/>
    </location>
    <ligand>
        <name>heme</name>
        <dbReference type="ChEBI" id="CHEBI:30413"/>
    </ligand>
    <ligandPart>
        <name>Fe</name>
        <dbReference type="ChEBI" id="CHEBI:18248"/>
    </ligandPart>
</feature>
<feature type="binding site" description="covalent" evidence="2">
    <location>
        <position position="56"/>
    </location>
    <ligand>
        <name>heme</name>
        <dbReference type="ChEBI" id="CHEBI:30413"/>
    </ligand>
</feature>
<feature type="binding site" description="covalent" evidence="2">
    <location>
        <position position="59"/>
    </location>
    <ligand>
        <name>heme</name>
        <dbReference type="ChEBI" id="CHEBI:30413"/>
    </ligand>
</feature>
<feature type="binding site" description="axial binding residue" evidence="2">
    <location>
        <position position="60"/>
    </location>
    <ligand>
        <name>heme</name>
        <dbReference type="ChEBI" id="CHEBI:30413"/>
    </ligand>
    <ligandPart>
        <name>Fe</name>
        <dbReference type="ChEBI" id="CHEBI:18248"/>
    </ligandPart>
</feature>
<gene>
    <name evidence="2" type="primary">petA</name>
</gene>
<proteinExistence type="inferred from homology"/>